<evidence type="ECO:0000255" key="1">
    <source>
        <dbReference type="HAMAP-Rule" id="MF_01358"/>
    </source>
</evidence>
<feature type="chain" id="PRO_0000357952" description="NADH-quinone oxidoreductase subunit D">
    <location>
        <begin position="1"/>
        <end position="390"/>
    </location>
</feature>
<keyword id="KW-1003">Cell membrane</keyword>
<keyword id="KW-0472">Membrane</keyword>
<keyword id="KW-0520">NAD</keyword>
<keyword id="KW-0874">Quinone</keyword>
<keyword id="KW-1278">Translocase</keyword>
<keyword id="KW-0813">Transport</keyword>
<keyword id="KW-0830">Ubiquinone</keyword>
<organism>
    <name type="scientific">Wolbachia pipientis wMel</name>
    <dbReference type="NCBI Taxonomy" id="163164"/>
    <lineage>
        <taxon>Bacteria</taxon>
        <taxon>Pseudomonadati</taxon>
        <taxon>Pseudomonadota</taxon>
        <taxon>Alphaproteobacteria</taxon>
        <taxon>Rickettsiales</taxon>
        <taxon>Anaplasmataceae</taxon>
        <taxon>Wolbachieae</taxon>
        <taxon>Wolbachia</taxon>
    </lineage>
</organism>
<gene>
    <name evidence="1" type="primary">nuoD</name>
    <name type="ordered locus">WD_0560</name>
</gene>
<dbReference type="EC" id="7.1.1.-" evidence="1"/>
<dbReference type="EMBL" id="AE017196">
    <property type="protein sequence ID" value="AAS14267.1"/>
    <property type="molecule type" value="Genomic_DNA"/>
</dbReference>
<dbReference type="RefSeq" id="WP_010962676.1">
    <property type="nucleotide sequence ID" value="NZ_OX384529.1"/>
</dbReference>
<dbReference type="SMR" id="Q73HJ8"/>
<dbReference type="EnsemblBacteria" id="AAS14267">
    <property type="protein sequence ID" value="AAS14267"/>
    <property type="gene ID" value="WD_0560"/>
</dbReference>
<dbReference type="KEGG" id="wol:WD_0560"/>
<dbReference type="eggNOG" id="COG0649">
    <property type="taxonomic scope" value="Bacteria"/>
</dbReference>
<dbReference type="Proteomes" id="UP000008215">
    <property type="component" value="Chromosome"/>
</dbReference>
<dbReference type="GO" id="GO:0005886">
    <property type="term" value="C:plasma membrane"/>
    <property type="evidence" value="ECO:0007669"/>
    <property type="project" value="UniProtKB-SubCell"/>
</dbReference>
<dbReference type="GO" id="GO:0051287">
    <property type="term" value="F:NAD binding"/>
    <property type="evidence" value="ECO:0007669"/>
    <property type="project" value="InterPro"/>
</dbReference>
<dbReference type="GO" id="GO:0050136">
    <property type="term" value="F:NADH:ubiquinone reductase (non-electrogenic) activity"/>
    <property type="evidence" value="ECO:0007669"/>
    <property type="project" value="UniProtKB-UniRule"/>
</dbReference>
<dbReference type="GO" id="GO:0048038">
    <property type="term" value="F:quinone binding"/>
    <property type="evidence" value="ECO:0007669"/>
    <property type="project" value="UniProtKB-KW"/>
</dbReference>
<dbReference type="FunFam" id="1.10.645.10:FF:000005">
    <property type="entry name" value="NADH-quinone oxidoreductase subunit D"/>
    <property type="match status" value="1"/>
</dbReference>
<dbReference type="Gene3D" id="1.10.645.10">
    <property type="entry name" value="Cytochrome-c3 Hydrogenase, chain B"/>
    <property type="match status" value="1"/>
</dbReference>
<dbReference type="HAMAP" id="MF_01358">
    <property type="entry name" value="NDH1_NuoD"/>
    <property type="match status" value="1"/>
</dbReference>
<dbReference type="InterPro" id="IPR001135">
    <property type="entry name" value="NADH_Q_OxRdtase_suD"/>
</dbReference>
<dbReference type="InterPro" id="IPR014029">
    <property type="entry name" value="NADH_UbQ_OxRdtase_49kDa_CS"/>
</dbReference>
<dbReference type="InterPro" id="IPR022885">
    <property type="entry name" value="NDH1_su_D/H"/>
</dbReference>
<dbReference type="InterPro" id="IPR029014">
    <property type="entry name" value="NiFe-Hase_large"/>
</dbReference>
<dbReference type="NCBIfam" id="TIGR01962">
    <property type="entry name" value="NuoD"/>
    <property type="match status" value="1"/>
</dbReference>
<dbReference type="NCBIfam" id="NF004739">
    <property type="entry name" value="PRK06075.1"/>
    <property type="match status" value="1"/>
</dbReference>
<dbReference type="PANTHER" id="PTHR11993:SF10">
    <property type="entry name" value="NADH DEHYDROGENASE [UBIQUINONE] IRON-SULFUR PROTEIN 2, MITOCHONDRIAL"/>
    <property type="match status" value="1"/>
</dbReference>
<dbReference type="PANTHER" id="PTHR11993">
    <property type="entry name" value="NADH-UBIQUINONE OXIDOREDUCTASE 49 KDA SUBUNIT"/>
    <property type="match status" value="1"/>
</dbReference>
<dbReference type="Pfam" id="PF00346">
    <property type="entry name" value="Complex1_49kDa"/>
    <property type="match status" value="1"/>
</dbReference>
<dbReference type="SUPFAM" id="SSF56762">
    <property type="entry name" value="HydB/Nqo4-like"/>
    <property type="match status" value="1"/>
</dbReference>
<dbReference type="PROSITE" id="PS00535">
    <property type="entry name" value="COMPLEX1_49K"/>
    <property type="match status" value="1"/>
</dbReference>
<proteinExistence type="inferred from homology"/>
<reference key="1">
    <citation type="journal article" date="2004" name="PLoS Biol.">
        <title>Phylogenomics of the reproductive parasite Wolbachia pipientis wMel: a streamlined genome overrun by mobile genetic elements.</title>
        <authorList>
            <person name="Wu M."/>
            <person name="Sun L.V."/>
            <person name="Vamathevan J.J."/>
            <person name="Riegler M."/>
            <person name="DeBoy R.T."/>
            <person name="Brownlie J.C."/>
            <person name="McGraw E.A."/>
            <person name="Martin W."/>
            <person name="Esser C."/>
            <person name="Ahmadinejad N."/>
            <person name="Wiegand C."/>
            <person name="Madupu R."/>
            <person name="Beanan M.J."/>
            <person name="Brinkac L.M."/>
            <person name="Daugherty S.C."/>
            <person name="Durkin A.S."/>
            <person name="Kolonay J.F."/>
            <person name="Nelson W.C."/>
            <person name="Mohamoud Y."/>
            <person name="Lee P."/>
            <person name="Berry K.J."/>
            <person name="Young M.B."/>
            <person name="Utterback T.R."/>
            <person name="Weidman J.F."/>
            <person name="Nierman W.C."/>
            <person name="Paulsen I.T."/>
            <person name="Nelson K.E."/>
            <person name="Tettelin H."/>
            <person name="O'Neill S.L."/>
            <person name="Eisen J.A."/>
        </authorList>
    </citation>
    <scope>NUCLEOTIDE SEQUENCE [LARGE SCALE GENOMIC DNA]</scope>
</reference>
<accession>Q73HJ8</accession>
<comment type="function">
    <text evidence="1">NDH-1 shuttles electrons from NADH, via FMN and iron-sulfur (Fe-S) centers, to quinones in the respiratory chain. The immediate electron acceptor for the enzyme in this species is believed to be ubiquinone. Couples the redox reaction to proton translocation (for every two electrons transferred, four hydrogen ions are translocated across the cytoplasmic membrane), and thus conserves the redox energy in a proton gradient.</text>
</comment>
<comment type="catalytic activity">
    <reaction evidence="1">
        <text>a quinone + NADH + 5 H(+)(in) = a quinol + NAD(+) + 4 H(+)(out)</text>
        <dbReference type="Rhea" id="RHEA:57888"/>
        <dbReference type="ChEBI" id="CHEBI:15378"/>
        <dbReference type="ChEBI" id="CHEBI:24646"/>
        <dbReference type="ChEBI" id="CHEBI:57540"/>
        <dbReference type="ChEBI" id="CHEBI:57945"/>
        <dbReference type="ChEBI" id="CHEBI:132124"/>
    </reaction>
</comment>
<comment type="subunit">
    <text evidence="1">NDH-1 is composed of 14 different subunits. Subunits NuoB, C, D, E, F, and G constitute the peripheral sector of the complex.</text>
</comment>
<comment type="subcellular location">
    <subcellularLocation>
        <location evidence="1">Cell membrane</location>
        <topology evidence="1">Peripheral membrane protein</topology>
        <orientation evidence="1">Cytoplasmic side</orientation>
    </subcellularLocation>
</comment>
<comment type="similarity">
    <text evidence="1">Belongs to the complex I 49 kDa subunit family.</text>
</comment>
<protein>
    <recommendedName>
        <fullName evidence="1">NADH-quinone oxidoreductase subunit D</fullName>
        <ecNumber evidence="1">7.1.1.-</ecNumber>
    </recommendedName>
    <alternativeName>
        <fullName evidence="1">NADH dehydrogenase I subunit D</fullName>
    </alternativeName>
    <alternativeName>
        <fullName evidence="1">NDH-1 subunit D</fullName>
    </alternativeName>
</protein>
<name>NUOD_WOLPM</name>
<sequence length="390" mass="44511">MPDLKTMMLNFGPQHPAAHGVLRLVLEMDGEVIERADPHIGLLHRGTEKLIEHKTYLQALPYFDRLDYVSPMSQEHAYSLCVEKLLQCEVPIRAKYLRVLFCELTRILNHLLNVSSQALDVGAMTPLLWLFEEREKILEFYERASGARFHAAYIRPGGIAADVPEDLIEDIAKFIEQFPKYIDDVDELLTENRIWKQRTVGISEISIKQALDWGFSGPMLRAAGLAWDLRKSQPYEIYDQLDFDIPIGQNGDCYDRYLVRMAEIRQSISLVKQCIEKMPEGQIKTEDRKISPPSRAEMKKSMEALIHHFKLYSEGYHVPEGEAYAVVEAPKGEFGVYIVSDGTNRPYRCRIRAPGFAHLQALDFMAKGHMLADVAAIIGSLDIVFGEIDR</sequence>